<protein>
    <recommendedName>
        <fullName>Uncharacterized protein Rv2077c</fullName>
    </recommendedName>
</protein>
<dbReference type="EMBL" id="AL123456">
    <property type="protein sequence ID" value="CCP44851.1"/>
    <property type="molecule type" value="Genomic_DNA"/>
</dbReference>
<dbReference type="PIR" id="H70765">
    <property type="entry name" value="H70765"/>
</dbReference>
<dbReference type="RefSeq" id="NP_216593.1">
    <property type="nucleotide sequence ID" value="NC_000962.3"/>
</dbReference>
<dbReference type="RefSeq" id="WP_003899159.1">
    <property type="nucleotide sequence ID" value="NZ_NVQJ01000047.1"/>
</dbReference>
<dbReference type="SMR" id="P9WLL1"/>
<dbReference type="STRING" id="83332.Rv2077c"/>
<dbReference type="PaxDb" id="83332-Rv2077c"/>
<dbReference type="DNASU" id="887785"/>
<dbReference type="GeneID" id="887785"/>
<dbReference type="KEGG" id="mtu:Rv2077c"/>
<dbReference type="KEGG" id="mtv:RVBD_2077c"/>
<dbReference type="TubercuList" id="Rv2077c"/>
<dbReference type="eggNOG" id="ENOG502ZB9M">
    <property type="taxonomic scope" value="Bacteria"/>
</dbReference>
<dbReference type="InParanoid" id="P9WLL1"/>
<dbReference type="OrthoDB" id="4710696at2"/>
<dbReference type="Proteomes" id="UP000001584">
    <property type="component" value="Chromosome"/>
</dbReference>
<dbReference type="GO" id="GO:0005829">
    <property type="term" value="C:cytosol"/>
    <property type="evidence" value="ECO:0007005"/>
    <property type="project" value="MTBBASE"/>
</dbReference>
<dbReference type="GO" id="GO:0005886">
    <property type="term" value="C:plasma membrane"/>
    <property type="evidence" value="ECO:0007669"/>
    <property type="project" value="UniProtKB-SubCell"/>
</dbReference>
<proteinExistence type="inferred from homology"/>
<organism>
    <name type="scientific">Mycobacterium tuberculosis (strain ATCC 25618 / H37Rv)</name>
    <dbReference type="NCBI Taxonomy" id="83332"/>
    <lineage>
        <taxon>Bacteria</taxon>
        <taxon>Bacillati</taxon>
        <taxon>Actinomycetota</taxon>
        <taxon>Actinomycetes</taxon>
        <taxon>Mycobacteriales</taxon>
        <taxon>Mycobacteriaceae</taxon>
        <taxon>Mycobacterium</taxon>
        <taxon>Mycobacterium tuberculosis complex</taxon>
    </lineage>
</organism>
<keyword id="KW-1003">Cell membrane</keyword>
<keyword id="KW-0472">Membrane</keyword>
<keyword id="KW-1185">Reference proteome</keyword>
<keyword id="KW-0732">Signal</keyword>
<keyword id="KW-0812">Transmembrane</keyword>
<keyword id="KW-1133">Transmembrane helix</keyword>
<comment type="subcellular location">
    <subcellularLocation>
        <location evidence="3">Cell membrane</location>
        <topology evidence="3">Multi-pass membrane protein</topology>
    </subcellularLocation>
</comment>
<gene>
    <name type="ordered locus">Rv2077c</name>
    <name type="ORF">MTCY49.16c</name>
</gene>
<reference key="1">
    <citation type="journal article" date="1998" name="Nature">
        <title>Deciphering the biology of Mycobacterium tuberculosis from the complete genome sequence.</title>
        <authorList>
            <person name="Cole S.T."/>
            <person name="Brosch R."/>
            <person name="Parkhill J."/>
            <person name="Garnier T."/>
            <person name="Churcher C.M."/>
            <person name="Harris D.E."/>
            <person name="Gordon S.V."/>
            <person name="Eiglmeier K."/>
            <person name="Gas S."/>
            <person name="Barry C.E. III"/>
            <person name="Tekaia F."/>
            <person name="Badcock K."/>
            <person name="Basham D."/>
            <person name="Brown D."/>
            <person name="Chillingworth T."/>
            <person name="Connor R."/>
            <person name="Davies R.M."/>
            <person name="Devlin K."/>
            <person name="Feltwell T."/>
            <person name="Gentles S."/>
            <person name="Hamlin N."/>
            <person name="Holroyd S."/>
            <person name="Hornsby T."/>
            <person name="Jagels K."/>
            <person name="Krogh A."/>
            <person name="McLean J."/>
            <person name="Moule S."/>
            <person name="Murphy L.D."/>
            <person name="Oliver S."/>
            <person name="Osborne J."/>
            <person name="Quail M.A."/>
            <person name="Rajandream M.A."/>
            <person name="Rogers J."/>
            <person name="Rutter S."/>
            <person name="Seeger K."/>
            <person name="Skelton S."/>
            <person name="Squares S."/>
            <person name="Squares R."/>
            <person name="Sulston J.E."/>
            <person name="Taylor K."/>
            <person name="Whitehead S."/>
            <person name="Barrell B.G."/>
        </authorList>
    </citation>
    <scope>NUCLEOTIDE SEQUENCE [LARGE SCALE GENOMIC DNA]</scope>
    <source>
        <strain>ATCC 25618 / H37Rv</strain>
    </source>
</reference>
<feature type="signal peptide" evidence="1">
    <location>
        <begin position="1"/>
        <end position="45"/>
    </location>
</feature>
<feature type="chain" id="PRO_0000014120" description="Uncharacterized protein Rv2077c">
    <location>
        <begin position="46"/>
        <end position="323"/>
    </location>
</feature>
<feature type="transmembrane region" description="Helical" evidence="1">
    <location>
        <begin position="269"/>
        <end position="289"/>
    </location>
</feature>
<feature type="transmembrane region" description="Helical" evidence="1">
    <location>
        <begin position="290"/>
        <end position="310"/>
    </location>
</feature>
<feature type="region of interest" description="Disordered" evidence="2">
    <location>
        <begin position="186"/>
        <end position="227"/>
    </location>
</feature>
<accession>P9WLL1</accession>
<accession>L0TA38</accession>
<accession>P64933</accession>
<accession>Q10685</accession>
<evidence type="ECO:0000255" key="1"/>
<evidence type="ECO:0000256" key="2">
    <source>
        <dbReference type="SAM" id="MobiDB-lite"/>
    </source>
</evidence>
<evidence type="ECO:0000305" key="3"/>
<name>Y2077_MYCTU</name>
<sequence>MLATLSQIRAWSTEHLIDAAGYWTETADRWEDVFLQMRNQAHAIAWNGAGGDGLRQRTRADFSTVSGIADQLRRAATIARNGAGTIDAAQRRVMYAVEDAQDAGFNVGEDLSVTDTKTTQPAAVQAARLAQAQALAGDIRLRVGQLVAAENEVSGQLAATTGDVGNVRFAGAPVVAHSAVQLVDFFKQDGPTPPPPGAPHPSGGADGPYSDPITSMMLPPAGTEAPVSDATKRWVDNMVNELAARPPDDPIAVEARRLAFQALHRPCNSAEWTAAVAGFAGSSAGVVGTALAIPAGPADWALLGAALLGVGGSGAAVVNCATK</sequence>